<gene>
    <name evidence="1" type="primary">hisB</name>
    <name type="ordered locus">Plut_0718</name>
</gene>
<organism>
    <name type="scientific">Chlorobium luteolum (strain DSM 273 / BCRC 81028 / 2530)</name>
    <name type="common">Pelodictyon luteolum</name>
    <dbReference type="NCBI Taxonomy" id="319225"/>
    <lineage>
        <taxon>Bacteria</taxon>
        <taxon>Pseudomonadati</taxon>
        <taxon>Chlorobiota</taxon>
        <taxon>Chlorobiia</taxon>
        <taxon>Chlorobiales</taxon>
        <taxon>Chlorobiaceae</taxon>
        <taxon>Chlorobium/Pelodictyon group</taxon>
        <taxon>Pelodictyon</taxon>
    </lineage>
</organism>
<dbReference type="EC" id="4.2.1.19" evidence="1"/>
<dbReference type="EMBL" id="CP000096">
    <property type="protein sequence ID" value="ABB23595.1"/>
    <property type="molecule type" value="Genomic_DNA"/>
</dbReference>
<dbReference type="RefSeq" id="WP_011357469.1">
    <property type="nucleotide sequence ID" value="NC_007512.1"/>
</dbReference>
<dbReference type="SMR" id="Q3B4Y6"/>
<dbReference type="STRING" id="319225.Plut_0718"/>
<dbReference type="KEGG" id="plt:Plut_0718"/>
<dbReference type="eggNOG" id="COG0131">
    <property type="taxonomic scope" value="Bacteria"/>
</dbReference>
<dbReference type="HOGENOM" id="CLU_044308_3_0_10"/>
<dbReference type="OrthoDB" id="9790411at2"/>
<dbReference type="UniPathway" id="UPA00031">
    <property type="reaction ID" value="UER00011"/>
</dbReference>
<dbReference type="Proteomes" id="UP000002709">
    <property type="component" value="Chromosome"/>
</dbReference>
<dbReference type="GO" id="GO:0005737">
    <property type="term" value="C:cytoplasm"/>
    <property type="evidence" value="ECO:0007669"/>
    <property type="project" value="UniProtKB-SubCell"/>
</dbReference>
<dbReference type="GO" id="GO:0004424">
    <property type="term" value="F:imidazoleglycerol-phosphate dehydratase activity"/>
    <property type="evidence" value="ECO:0007669"/>
    <property type="project" value="UniProtKB-UniRule"/>
</dbReference>
<dbReference type="GO" id="GO:0000105">
    <property type="term" value="P:L-histidine biosynthetic process"/>
    <property type="evidence" value="ECO:0007669"/>
    <property type="project" value="UniProtKB-UniRule"/>
</dbReference>
<dbReference type="CDD" id="cd07914">
    <property type="entry name" value="IGPD"/>
    <property type="match status" value="1"/>
</dbReference>
<dbReference type="FunFam" id="3.30.230.40:FF:000001">
    <property type="entry name" value="Imidazoleglycerol-phosphate dehydratase HisB"/>
    <property type="match status" value="1"/>
</dbReference>
<dbReference type="FunFam" id="3.30.230.40:FF:000003">
    <property type="entry name" value="Imidazoleglycerol-phosphate dehydratase HisB"/>
    <property type="match status" value="1"/>
</dbReference>
<dbReference type="Gene3D" id="3.30.230.40">
    <property type="entry name" value="Imidazole glycerol phosphate dehydratase, domain 1"/>
    <property type="match status" value="2"/>
</dbReference>
<dbReference type="HAMAP" id="MF_00076">
    <property type="entry name" value="HisB"/>
    <property type="match status" value="1"/>
</dbReference>
<dbReference type="InterPro" id="IPR038494">
    <property type="entry name" value="IGPD_sf"/>
</dbReference>
<dbReference type="InterPro" id="IPR000807">
    <property type="entry name" value="ImidazoleglycerolP_deHydtase"/>
</dbReference>
<dbReference type="InterPro" id="IPR020565">
    <property type="entry name" value="ImidazoleglycerP_deHydtase_CS"/>
</dbReference>
<dbReference type="InterPro" id="IPR020568">
    <property type="entry name" value="Ribosomal_Su5_D2-typ_SF"/>
</dbReference>
<dbReference type="NCBIfam" id="NF002111">
    <property type="entry name" value="PRK00951.2-1"/>
    <property type="match status" value="1"/>
</dbReference>
<dbReference type="NCBIfam" id="NF002114">
    <property type="entry name" value="PRK00951.2-4"/>
    <property type="match status" value="1"/>
</dbReference>
<dbReference type="PANTHER" id="PTHR23133:SF2">
    <property type="entry name" value="IMIDAZOLEGLYCEROL-PHOSPHATE DEHYDRATASE"/>
    <property type="match status" value="1"/>
</dbReference>
<dbReference type="PANTHER" id="PTHR23133">
    <property type="entry name" value="IMIDAZOLEGLYCEROL-PHOSPHATE DEHYDRATASE HIS7"/>
    <property type="match status" value="1"/>
</dbReference>
<dbReference type="Pfam" id="PF00475">
    <property type="entry name" value="IGPD"/>
    <property type="match status" value="1"/>
</dbReference>
<dbReference type="SUPFAM" id="SSF54211">
    <property type="entry name" value="Ribosomal protein S5 domain 2-like"/>
    <property type="match status" value="2"/>
</dbReference>
<dbReference type="PROSITE" id="PS00954">
    <property type="entry name" value="IGP_DEHYDRATASE_1"/>
    <property type="match status" value="1"/>
</dbReference>
<dbReference type="PROSITE" id="PS00955">
    <property type="entry name" value="IGP_DEHYDRATASE_2"/>
    <property type="match status" value="1"/>
</dbReference>
<name>HIS7_CHLL3</name>
<accession>Q3B4Y6</accession>
<feature type="chain" id="PRO_0000336330" description="Imidazoleglycerol-phosphate dehydratase">
    <location>
        <begin position="1"/>
        <end position="200"/>
    </location>
</feature>
<evidence type="ECO:0000255" key="1">
    <source>
        <dbReference type="HAMAP-Rule" id="MF_00076"/>
    </source>
</evidence>
<comment type="catalytic activity">
    <reaction evidence="1">
        <text>D-erythro-1-(imidazol-4-yl)glycerol 3-phosphate = 3-(imidazol-4-yl)-2-oxopropyl phosphate + H2O</text>
        <dbReference type="Rhea" id="RHEA:11040"/>
        <dbReference type="ChEBI" id="CHEBI:15377"/>
        <dbReference type="ChEBI" id="CHEBI:57766"/>
        <dbReference type="ChEBI" id="CHEBI:58278"/>
        <dbReference type="EC" id="4.2.1.19"/>
    </reaction>
</comment>
<comment type="pathway">
    <text evidence="1">Amino-acid biosynthesis; L-histidine biosynthesis; L-histidine from 5-phospho-alpha-D-ribose 1-diphosphate: step 6/9.</text>
</comment>
<comment type="subcellular location">
    <subcellularLocation>
        <location evidence="1">Cytoplasm</location>
    </subcellularLocation>
</comment>
<comment type="similarity">
    <text evidence="1">Belongs to the imidazoleglycerol-phosphate dehydratase family.</text>
</comment>
<protein>
    <recommendedName>
        <fullName evidence="1">Imidazoleglycerol-phosphate dehydratase</fullName>
        <shortName evidence="1">IGPD</shortName>
        <ecNumber evidence="1">4.2.1.19</ecNumber>
    </recommendedName>
</protein>
<sequence length="200" mass="20975">MPEASTSAPRQATVTRKTSETDISATLSLDGTGTSSIQTGVGFLDHMLTSFSRHSRIDLAVICKGDLEVDDHHSVEDVAIVIGSAILQALGSRAGIRRFGSALVPMDESLARAAVDLGGRSFAVVKAEFGRPVIQGMSTEMVGHFFTSIASGLKANIHIAVLDGHNTHHMIEAMFKAFALAMKDAVCIEGGGIPSTKGVL</sequence>
<proteinExistence type="inferred from homology"/>
<keyword id="KW-0028">Amino-acid biosynthesis</keyword>
<keyword id="KW-0963">Cytoplasm</keyword>
<keyword id="KW-0368">Histidine biosynthesis</keyword>
<keyword id="KW-0456">Lyase</keyword>
<keyword id="KW-1185">Reference proteome</keyword>
<reference key="1">
    <citation type="submission" date="2005-08" db="EMBL/GenBank/DDBJ databases">
        <title>Complete sequence of Pelodictyon luteolum DSM 273.</title>
        <authorList>
            <consortium name="US DOE Joint Genome Institute"/>
            <person name="Copeland A."/>
            <person name="Lucas S."/>
            <person name="Lapidus A."/>
            <person name="Barry K."/>
            <person name="Detter J.C."/>
            <person name="Glavina T."/>
            <person name="Hammon N."/>
            <person name="Israni S."/>
            <person name="Pitluck S."/>
            <person name="Bryant D."/>
            <person name="Schmutz J."/>
            <person name="Larimer F."/>
            <person name="Land M."/>
            <person name="Kyrpides N."/>
            <person name="Ivanova N."/>
            <person name="Richardson P."/>
        </authorList>
    </citation>
    <scope>NUCLEOTIDE SEQUENCE [LARGE SCALE GENOMIC DNA]</scope>
    <source>
        <strain>DSM 273 / BCRC 81028 / 2530</strain>
    </source>
</reference>